<gene>
    <name evidence="2" type="primary">deoD</name>
    <name type="ordered locus">BUAPTUC7_535</name>
</gene>
<sequence>MSTPHINSKKDDFSDIVLMPGDPVRAKYIAEKYLSNFVQVNDTRLMLAYTGFYKNRKISIMSHGIGIPSASLYTRELIIEFNVKKIIRIGTCGAVRDDIKLRDIVISMGASTDSKVNRIRFNDHDFAAIADFDMIYNIVSISKKMKIKVSIGNFFTTDSFYNDDKKMLNILKKYNIIGVDMETAGIYGVASELKVQALSICTVSDHITNKEFLSSKERESSFNDMIELALESVL</sequence>
<organism>
    <name type="scientific">Buchnera aphidicola subsp. Acyrthosiphon pisum (strain Tuc7)</name>
    <dbReference type="NCBI Taxonomy" id="561501"/>
    <lineage>
        <taxon>Bacteria</taxon>
        <taxon>Pseudomonadati</taxon>
        <taxon>Pseudomonadota</taxon>
        <taxon>Gammaproteobacteria</taxon>
        <taxon>Enterobacterales</taxon>
        <taxon>Erwiniaceae</taxon>
        <taxon>Buchnera</taxon>
    </lineage>
</organism>
<name>DEOD_BUCAT</name>
<dbReference type="EC" id="2.4.2.1" evidence="2"/>
<dbReference type="EMBL" id="CP001158">
    <property type="protein sequence ID" value="ACL30330.1"/>
    <property type="molecule type" value="Genomic_DNA"/>
</dbReference>
<dbReference type="RefSeq" id="WP_010896154.1">
    <property type="nucleotide sequence ID" value="NC_011834.1"/>
</dbReference>
<dbReference type="SMR" id="B8D865"/>
<dbReference type="KEGG" id="bau:BUAPTUC7_535"/>
<dbReference type="HOGENOM" id="CLU_068457_2_0_6"/>
<dbReference type="GO" id="GO:0005829">
    <property type="term" value="C:cytosol"/>
    <property type="evidence" value="ECO:0007669"/>
    <property type="project" value="TreeGrafter"/>
</dbReference>
<dbReference type="GO" id="GO:0004731">
    <property type="term" value="F:purine-nucleoside phosphorylase activity"/>
    <property type="evidence" value="ECO:0007669"/>
    <property type="project" value="UniProtKB-UniRule"/>
</dbReference>
<dbReference type="GO" id="GO:0006152">
    <property type="term" value="P:purine nucleoside catabolic process"/>
    <property type="evidence" value="ECO:0007669"/>
    <property type="project" value="TreeGrafter"/>
</dbReference>
<dbReference type="CDD" id="cd09006">
    <property type="entry name" value="PNP_EcPNPI-like"/>
    <property type="match status" value="1"/>
</dbReference>
<dbReference type="Gene3D" id="3.40.50.1580">
    <property type="entry name" value="Nucleoside phosphorylase domain"/>
    <property type="match status" value="1"/>
</dbReference>
<dbReference type="HAMAP" id="MF_01627">
    <property type="entry name" value="Pur_nucleosid_phosp"/>
    <property type="match status" value="1"/>
</dbReference>
<dbReference type="InterPro" id="IPR004402">
    <property type="entry name" value="DeoD-type"/>
</dbReference>
<dbReference type="InterPro" id="IPR018016">
    <property type="entry name" value="Nucleoside_phosphorylase_CS"/>
</dbReference>
<dbReference type="InterPro" id="IPR000845">
    <property type="entry name" value="Nucleoside_phosphorylase_d"/>
</dbReference>
<dbReference type="InterPro" id="IPR035994">
    <property type="entry name" value="Nucleoside_phosphorylase_sf"/>
</dbReference>
<dbReference type="NCBIfam" id="TIGR00107">
    <property type="entry name" value="deoD"/>
    <property type="match status" value="1"/>
</dbReference>
<dbReference type="NCBIfam" id="NF004489">
    <property type="entry name" value="PRK05819.1"/>
    <property type="match status" value="1"/>
</dbReference>
<dbReference type="PANTHER" id="PTHR43691:SF11">
    <property type="entry name" value="FI09636P-RELATED"/>
    <property type="match status" value="1"/>
</dbReference>
<dbReference type="PANTHER" id="PTHR43691">
    <property type="entry name" value="URIDINE PHOSPHORYLASE"/>
    <property type="match status" value="1"/>
</dbReference>
<dbReference type="Pfam" id="PF01048">
    <property type="entry name" value="PNP_UDP_1"/>
    <property type="match status" value="1"/>
</dbReference>
<dbReference type="SUPFAM" id="SSF53167">
    <property type="entry name" value="Purine and uridine phosphorylases"/>
    <property type="match status" value="1"/>
</dbReference>
<dbReference type="PROSITE" id="PS01232">
    <property type="entry name" value="PNP_UDP_1"/>
    <property type="match status" value="1"/>
</dbReference>
<protein>
    <recommendedName>
        <fullName evidence="2">Purine nucleoside phosphorylase DeoD-type</fullName>
        <shortName evidence="2">PNP</shortName>
        <ecNumber evidence="2">2.4.2.1</ecNumber>
    </recommendedName>
</protein>
<proteinExistence type="inferred from homology"/>
<comment type="function">
    <text evidence="2">Catalyzes the reversible phosphorolytic breakdown of the N-glycosidic bond in the beta-(deoxy)ribonucleoside molecules, with the formation of the corresponding free purine bases and pentose-1-phosphate.</text>
</comment>
<comment type="catalytic activity">
    <reaction evidence="2">
        <text>a purine D-ribonucleoside + phosphate = a purine nucleobase + alpha-D-ribose 1-phosphate</text>
        <dbReference type="Rhea" id="RHEA:19805"/>
        <dbReference type="ChEBI" id="CHEBI:26386"/>
        <dbReference type="ChEBI" id="CHEBI:43474"/>
        <dbReference type="ChEBI" id="CHEBI:57720"/>
        <dbReference type="ChEBI" id="CHEBI:142355"/>
        <dbReference type="EC" id="2.4.2.1"/>
    </reaction>
</comment>
<comment type="catalytic activity">
    <reaction evidence="2">
        <text>a purine 2'-deoxy-D-ribonucleoside + phosphate = a purine nucleobase + 2-deoxy-alpha-D-ribose 1-phosphate</text>
        <dbReference type="Rhea" id="RHEA:36431"/>
        <dbReference type="ChEBI" id="CHEBI:26386"/>
        <dbReference type="ChEBI" id="CHEBI:43474"/>
        <dbReference type="ChEBI" id="CHEBI:57259"/>
        <dbReference type="ChEBI" id="CHEBI:142361"/>
        <dbReference type="EC" id="2.4.2.1"/>
    </reaction>
</comment>
<comment type="subunit">
    <text evidence="2">Homohexamer; trimer of homodimers.</text>
</comment>
<comment type="similarity">
    <text evidence="2">Belongs to the PNP/UDP phosphorylase family.</text>
</comment>
<feature type="chain" id="PRO_1000186182" description="Purine nucleoside phosphorylase DeoD-type">
    <location>
        <begin position="1"/>
        <end position="234"/>
    </location>
</feature>
<feature type="active site" description="Proton donor" evidence="2">
    <location>
        <position position="205"/>
    </location>
</feature>
<feature type="binding site" evidence="1">
    <location>
        <position position="5"/>
    </location>
    <ligand>
        <name>a purine D-ribonucleoside</name>
        <dbReference type="ChEBI" id="CHEBI:142355"/>
        <note>ligand shared between dimeric partners</note>
    </ligand>
</feature>
<feature type="binding site" description="in other chain" evidence="1">
    <location>
        <position position="21"/>
    </location>
    <ligand>
        <name>phosphate</name>
        <dbReference type="ChEBI" id="CHEBI:43474"/>
        <note>ligand shared between dimeric partners</note>
    </ligand>
</feature>
<feature type="binding site" description="in other chain" evidence="1">
    <location>
        <position position="25"/>
    </location>
    <ligand>
        <name>phosphate</name>
        <dbReference type="ChEBI" id="CHEBI:43474"/>
        <note>ligand shared between dimeric partners</note>
    </ligand>
</feature>
<feature type="binding site" evidence="1">
    <location>
        <position position="44"/>
    </location>
    <ligand>
        <name>phosphate</name>
        <dbReference type="ChEBI" id="CHEBI:43474"/>
        <note>ligand shared between dimeric partners</note>
    </ligand>
</feature>
<feature type="binding site" description="in other chain" evidence="1">
    <location>
        <begin position="88"/>
        <end position="91"/>
    </location>
    <ligand>
        <name>phosphate</name>
        <dbReference type="ChEBI" id="CHEBI:43474"/>
        <note>ligand shared between dimeric partners</note>
    </ligand>
</feature>
<feature type="binding site" description="in other chain" evidence="1">
    <location>
        <begin position="180"/>
        <end position="182"/>
    </location>
    <ligand>
        <name>a purine D-ribonucleoside</name>
        <dbReference type="ChEBI" id="CHEBI:142355"/>
        <note>ligand shared between dimeric partners</note>
    </ligand>
</feature>
<feature type="binding site" description="in other chain" evidence="1">
    <location>
        <begin position="204"/>
        <end position="205"/>
    </location>
    <ligand>
        <name>a purine D-ribonucleoside</name>
        <dbReference type="ChEBI" id="CHEBI:142355"/>
        <note>ligand shared between dimeric partners</note>
    </ligand>
</feature>
<feature type="site" description="Important for catalytic activity" evidence="2">
    <location>
        <position position="218"/>
    </location>
</feature>
<keyword id="KW-0328">Glycosyltransferase</keyword>
<keyword id="KW-0808">Transferase</keyword>
<accession>B8D865</accession>
<reference key="1">
    <citation type="journal article" date="2009" name="Science">
        <title>The dynamics and time scale of ongoing genomic erosion in symbiotic bacteria.</title>
        <authorList>
            <person name="Moran N.A."/>
            <person name="McLaughlin H.J."/>
            <person name="Sorek R."/>
        </authorList>
    </citation>
    <scope>NUCLEOTIDE SEQUENCE [LARGE SCALE GENOMIC DNA]</scope>
    <source>
        <strain>Tuc7</strain>
    </source>
</reference>
<evidence type="ECO:0000250" key="1">
    <source>
        <dbReference type="UniProtKB" id="P50389"/>
    </source>
</evidence>
<evidence type="ECO:0000255" key="2">
    <source>
        <dbReference type="HAMAP-Rule" id="MF_01627"/>
    </source>
</evidence>